<protein>
    <recommendedName>
        <fullName evidence="1">Translation initiation factor IF-1</fullName>
    </recommendedName>
</protein>
<reference key="1">
    <citation type="submission" date="2007-08" db="EMBL/GenBank/DDBJ databases">
        <title>Complete sequence of Shewanella sediminis HAW-EB3.</title>
        <authorList>
            <consortium name="US DOE Joint Genome Institute"/>
            <person name="Copeland A."/>
            <person name="Lucas S."/>
            <person name="Lapidus A."/>
            <person name="Barry K."/>
            <person name="Glavina del Rio T."/>
            <person name="Dalin E."/>
            <person name="Tice H."/>
            <person name="Pitluck S."/>
            <person name="Chertkov O."/>
            <person name="Brettin T."/>
            <person name="Bruce D."/>
            <person name="Detter J.C."/>
            <person name="Han C."/>
            <person name="Schmutz J."/>
            <person name="Larimer F."/>
            <person name="Land M."/>
            <person name="Hauser L."/>
            <person name="Kyrpides N."/>
            <person name="Kim E."/>
            <person name="Zhao J.-S."/>
            <person name="Richardson P."/>
        </authorList>
    </citation>
    <scope>NUCLEOTIDE SEQUENCE [LARGE SCALE GENOMIC DNA]</scope>
    <source>
        <strain>HAW-EB3</strain>
    </source>
</reference>
<feature type="chain" id="PRO_0000338922" description="Translation initiation factor IF-1">
    <location>
        <begin position="1"/>
        <end position="72"/>
    </location>
</feature>
<feature type="domain" description="S1-like" evidence="1">
    <location>
        <begin position="1"/>
        <end position="72"/>
    </location>
</feature>
<evidence type="ECO:0000255" key="1">
    <source>
        <dbReference type="HAMAP-Rule" id="MF_00075"/>
    </source>
</evidence>
<comment type="function">
    <text evidence="1">One of the essential components for the initiation of protein synthesis. Stabilizes the binding of IF-2 and IF-3 on the 30S subunit to which N-formylmethionyl-tRNA(fMet) subsequently binds. Helps modulate mRNA selection, yielding the 30S pre-initiation complex (PIC). Upon addition of the 50S ribosomal subunit IF-1, IF-2 and IF-3 are released leaving the mature 70S translation initiation complex.</text>
</comment>
<comment type="subunit">
    <text evidence="1">Component of the 30S ribosomal translation pre-initiation complex which assembles on the 30S ribosome in the order IF-2 and IF-3, IF-1 and N-formylmethionyl-tRNA(fMet); mRNA recruitment can occur at any time during PIC assembly.</text>
</comment>
<comment type="subcellular location">
    <subcellularLocation>
        <location evidence="1">Cytoplasm</location>
    </subcellularLocation>
</comment>
<comment type="similarity">
    <text evidence="1">Belongs to the IF-1 family.</text>
</comment>
<accession>A8FUH5</accession>
<keyword id="KW-0963">Cytoplasm</keyword>
<keyword id="KW-0396">Initiation factor</keyword>
<keyword id="KW-0648">Protein biosynthesis</keyword>
<keyword id="KW-1185">Reference proteome</keyword>
<keyword id="KW-0694">RNA-binding</keyword>
<keyword id="KW-0699">rRNA-binding</keyword>
<proteinExistence type="inferred from homology"/>
<organism>
    <name type="scientific">Shewanella sediminis (strain HAW-EB3)</name>
    <dbReference type="NCBI Taxonomy" id="425104"/>
    <lineage>
        <taxon>Bacteria</taxon>
        <taxon>Pseudomonadati</taxon>
        <taxon>Pseudomonadota</taxon>
        <taxon>Gammaproteobacteria</taxon>
        <taxon>Alteromonadales</taxon>
        <taxon>Shewanellaceae</taxon>
        <taxon>Shewanella</taxon>
    </lineage>
</organism>
<sequence>MAKEDNIEMQGTILETLPNTMFRVELENGHVVIAHISGKMRKNYIRILTGDKVTVQLTPYDLSKGRIVFRSR</sequence>
<name>IF1_SHESH</name>
<dbReference type="EMBL" id="CP000821">
    <property type="protein sequence ID" value="ABV36498.1"/>
    <property type="molecule type" value="Genomic_DNA"/>
</dbReference>
<dbReference type="RefSeq" id="WP_011865366.1">
    <property type="nucleotide sequence ID" value="NC_009831.1"/>
</dbReference>
<dbReference type="SMR" id="A8FUH5"/>
<dbReference type="STRING" id="425104.Ssed_1887"/>
<dbReference type="KEGG" id="sse:Ssed_1887"/>
<dbReference type="eggNOG" id="COG0361">
    <property type="taxonomic scope" value="Bacteria"/>
</dbReference>
<dbReference type="HOGENOM" id="CLU_151267_1_0_6"/>
<dbReference type="OrthoDB" id="9803250at2"/>
<dbReference type="Proteomes" id="UP000002015">
    <property type="component" value="Chromosome"/>
</dbReference>
<dbReference type="GO" id="GO:0005829">
    <property type="term" value="C:cytosol"/>
    <property type="evidence" value="ECO:0007669"/>
    <property type="project" value="TreeGrafter"/>
</dbReference>
<dbReference type="GO" id="GO:0043022">
    <property type="term" value="F:ribosome binding"/>
    <property type="evidence" value="ECO:0007669"/>
    <property type="project" value="UniProtKB-UniRule"/>
</dbReference>
<dbReference type="GO" id="GO:0019843">
    <property type="term" value="F:rRNA binding"/>
    <property type="evidence" value="ECO:0007669"/>
    <property type="project" value="UniProtKB-UniRule"/>
</dbReference>
<dbReference type="GO" id="GO:0003743">
    <property type="term" value="F:translation initiation factor activity"/>
    <property type="evidence" value="ECO:0007669"/>
    <property type="project" value="UniProtKB-UniRule"/>
</dbReference>
<dbReference type="CDD" id="cd04451">
    <property type="entry name" value="S1_IF1"/>
    <property type="match status" value="1"/>
</dbReference>
<dbReference type="FunFam" id="2.40.50.140:FF:000002">
    <property type="entry name" value="Translation initiation factor IF-1"/>
    <property type="match status" value="1"/>
</dbReference>
<dbReference type="Gene3D" id="2.40.50.140">
    <property type="entry name" value="Nucleic acid-binding proteins"/>
    <property type="match status" value="1"/>
</dbReference>
<dbReference type="HAMAP" id="MF_00075">
    <property type="entry name" value="IF_1"/>
    <property type="match status" value="1"/>
</dbReference>
<dbReference type="InterPro" id="IPR012340">
    <property type="entry name" value="NA-bd_OB-fold"/>
</dbReference>
<dbReference type="InterPro" id="IPR006196">
    <property type="entry name" value="RNA-binding_domain_S1_IF1"/>
</dbReference>
<dbReference type="InterPro" id="IPR003029">
    <property type="entry name" value="S1_domain"/>
</dbReference>
<dbReference type="InterPro" id="IPR004368">
    <property type="entry name" value="TIF_IF1"/>
</dbReference>
<dbReference type="NCBIfam" id="TIGR00008">
    <property type="entry name" value="infA"/>
    <property type="match status" value="1"/>
</dbReference>
<dbReference type="PANTHER" id="PTHR33370">
    <property type="entry name" value="TRANSLATION INITIATION FACTOR IF-1, CHLOROPLASTIC"/>
    <property type="match status" value="1"/>
</dbReference>
<dbReference type="PANTHER" id="PTHR33370:SF1">
    <property type="entry name" value="TRANSLATION INITIATION FACTOR IF-1, CHLOROPLASTIC"/>
    <property type="match status" value="1"/>
</dbReference>
<dbReference type="Pfam" id="PF01176">
    <property type="entry name" value="eIF-1a"/>
    <property type="match status" value="1"/>
</dbReference>
<dbReference type="SMART" id="SM00316">
    <property type="entry name" value="S1"/>
    <property type="match status" value="1"/>
</dbReference>
<dbReference type="SUPFAM" id="SSF50249">
    <property type="entry name" value="Nucleic acid-binding proteins"/>
    <property type="match status" value="1"/>
</dbReference>
<dbReference type="PROSITE" id="PS50832">
    <property type="entry name" value="S1_IF1_TYPE"/>
    <property type="match status" value="1"/>
</dbReference>
<gene>
    <name evidence="1" type="primary">infA</name>
    <name type="ordered locus">Ssed_1887</name>
</gene>